<name>HIS1_THET8</name>
<feature type="chain" id="PRO_0000229336" description="ATP phosphoribosyltransferase">
    <location>
        <begin position="1"/>
        <end position="206"/>
    </location>
</feature>
<dbReference type="EC" id="2.4.2.17" evidence="1"/>
<dbReference type="EMBL" id="AP008226">
    <property type="protein sequence ID" value="BAD69951.1"/>
    <property type="molecule type" value="Genomic_DNA"/>
</dbReference>
<dbReference type="RefSeq" id="WP_011174220.1">
    <property type="nucleotide sequence ID" value="NC_006461.1"/>
</dbReference>
<dbReference type="RefSeq" id="YP_143394.1">
    <property type="nucleotide sequence ID" value="NC_006461.1"/>
</dbReference>
<dbReference type="SMR" id="Q5SM15"/>
<dbReference type="EnsemblBacteria" id="BAD69951">
    <property type="protein sequence ID" value="BAD69951"/>
    <property type="gene ID" value="BAD69951"/>
</dbReference>
<dbReference type="GeneID" id="3168686"/>
<dbReference type="KEGG" id="ttj:TTHA0128"/>
<dbReference type="PATRIC" id="fig|300852.9.peg.126"/>
<dbReference type="eggNOG" id="COG0040">
    <property type="taxonomic scope" value="Bacteria"/>
</dbReference>
<dbReference type="HOGENOM" id="CLU_038115_2_0_0"/>
<dbReference type="PhylomeDB" id="Q5SM15"/>
<dbReference type="UniPathway" id="UPA00031">
    <property type="reaction ID" value="UER00006"/>
</dbReference>
<dbReference type="Proteomes" id="UP000000532">
    <property type="component" value="Chromosome"/>
</dbReference>
<dbReference type="GO" id="GO:0005737">
    <property type="term" value="C:cytoplasm"/>
    <property type="evidence" value="ECO:0007669"/>
    <property type="project" value="UniProtKB-SubCell"/>
</dbReference>
<dbReference type="GO" id="GO:0005524">
    <property type="term" value="F:ATP binding"/>
    <property type="evidence" value="ECO:0007669"/>
    <property type="project" value="UniProtKB-KW"/>
</dbReference>
<dbReference type="GO" id="GO:0003879">
    <property type="term" value="F:ATP phosphoribosyltransferase activity"/>
    <property type="evidence" value="ECO:0007669"/>
    <property type="project" value="UniProtKB-UniRule"/>
</dbReference>
<dbReference type="GO" id="GO:0000105">
    <property type="term" value="P:L-histidine biosynthetic process"/>
    <property type="evidence" value="ECO:0007669"/>
    <property type="project" value="UniProtKB-UniRule"/>
</dbReference>
<dbReference type="CDD" id="cd13595">
    <property type="entry name" value="PBP2_HisGs"/>
    <property type="match status" value="1"/>
</dbReference>
<dbReference type="Gene3D" id="3.40.190.10">
    <property type="entry name" value="Periplasmic binding protein-like II"/>
    <property type="match status" value="2"/>
</dbReference>
<dbReference type="HAMAP" id="MF_01018">
    <property type="entry name" value="HisG_Short"/>
    <property type="match status" value="1"/>
</dbReference>
<dbReference type="InterPro" id="IPR013820">
    <property type="entry name" value="ATP_PRibTrfase_cat"/>
</dbReference>
<dbReference type="InterPro" id="IPR018198">
    <property type="entry name" value="ATP_PRibTrfase_CS"/>
</dbReference>
<dbReference type="InterPro" id="IPR001348">
    <property type="entry name" value="ATP_PRibTrfase_HisG"/>
</dbReference>
<dbReference type="InterPro" id="IPR024893">
    <property type="entry name" value="ATP_PRibTrfase_HisG_short"/>
</dbReference>
<dbReference type="NCBIfam" id="TIGR00070">
    <property type="entry name" value="hisG"/>
    <property type="match status" value="1"/>
</dbReference>
<dbReference type="PANTHER" id="PTHR21403:SF8">
    <property type="entry name" value="ATP PHOSPHORIBOSYLTRANSFERASE"/>
    <property type="match status" value="1"/>
</dbReference>
<dbReference type="PANTHER" id="PTHR21403">
    <property type="entry name" value="ATP PHOSPHORIBOSYLTRANSFERASE ATP-PRTASE"/>
    <property type="match status" value="1"/>
</dbReference>
<dbReference type="Pfam" id="PF01634">
    <property type="entry name" value="HisG"/>
    <property type="match status" value="1"/>
</dbReference>
<dbReference type="SUPFAM" id="SSF53850">
    <property type="entry name" value="Periplasmic binding protein-like II"/>
    <property type="match status" value="1"/>
</dbReference>
<dbReference type="PROSITE" id="PS01316">
    <property type="entry name" value="ATP_P_PHORIBOSYLTR"/>
    <property type="match status" value="1"/>
</dbReference>
<comment type="function">
    <text evidence="1">Catalyzes the condensation of ATP and 5-phosphoribose 1-diphosphate to form N'-(5'-phosphoribosyl)-ATP (PR-ATP). Has a crucial role in the pathway because the rate of histidine biosynthesis seems to be controlled primarily by regulation of HisG enzymatic activity.</text>
</comment>
<comment type="catalytic activity">
    <reaction evidence="1">
        <text>1-(5-phospho-beta-D-ribosyl)-ATP + diphosphate = 5-phospho-alpha-D-ribose 1-diphosphate + ATP</text>
        <dbReference type="Rhea" id="RHEA:18473"/>
        <dbReference type="ChEBI" id="CHEBI:30616"/>
        <dbReference type="ChEBI" id="CHEBI:33019"/>
        <dbReference type="ChEBI" id="CHEBI:58017"/>
        <dbReference type="ChEBI" id="CHEBI:73183"/>
        <dbReference type="EC" id="2.4.2.17"/>
    </reaction>
</comment>
<comment type="pathway">
    <text evidence="1">Amino-acid biosynthesis; L-histidine biosynthesis; L-histidine from 5-phospho-alpha-D-ribose 1-diphosphate: step 1/9.</text>
</comment>
<comment type="subunit">
    <text evidence="1">Heteromultimer composed of HisG and HisZ subunits.</text>
</comment>
<comment type="subcellular location">
    <subcellularLocation>
        <location evidence="1">Cytoplasm</location>
    </subcellularLocation>
</comment>
<comment type="domain">
    <text>Lacks the C-terminal regulatory region which is replaced by HisZ.</text>
</comment>
<comment type="similarity">
    <text evidence="1">Belongs to the ATP phosphoribosyltransferase family. Short subfamily.</text>
</comment>
<accession>Q5SM15</accession>
<reference key="1">
    <citation type="submission" date="2004-11" db="EMBL/GenBank/DDBJ databases">
        <title>Complete genome sequence of Thermus thermophilus HB8.</title>
        <authorList>
            <person name="Masui R."/>
            <person name="Kurokawa K."/>
            <person name="Nakagawa N."/>
            <person name="Tokunaga F."/>
            <person name="Koyama Y."/>
            <person name="Shibata T."/>
            <person name="Oshima T."/>
            <person name="Yokoyama S."/>
            <person name="Yasunaga T."/>
            <person name="Kuramitsu S."/>
        </authorList>
    </citation>
    <scope>NUCLEOTIDE SEQUENCE [LARGE SCALE GENOMIC DNA]</scope>
    <source>
        <strain>ATCC 27634 / DSM 579 / HB8</strain>
    </source>
</reference>
<proteinExistence type="inferred from homology"/>
<keyword id="KW-0028">Amino-acid biosynthesis</keyword>
<keyword id="KW-0067">ATP-binding</keyword>
<keyword id="KW-0963">Cytoplasm</keyword>
<keyword id="KW-0328">Glycosyltransferase</keyword>
<keyword id="KW-0368">Histidine biosynthesis</keyword>
<keyword id="KW-0547">Nucleotide-binding</keyword>
<keyword id="KW-1185">Reference proteome</keyword>
<keyword id="KW-0808">Transferase</keyword>
<protein>
    <recommendedName>
        <fullName evidence="1">ATP phosphoribosyltransferase</fullName>
        <shortName evidence="1">ATP-PRT</shortName>
        <shortName evidence="1">ATP-PRTase</shortName>
        <ecNumber evidence="1">2.4.2.17</ecNumber>
    </recommendedName>
</protein>
<sequence length="206" mass="22381">MRRFALTVALPKGRMFREAYEVLKRAGLDLPEVEGERTLLHGKEGGVALLELRNKDVPIYVDLGIAEIGVVGKDVLLDSGRDLFEPVDLGFGACRLSLIRRPGDTGPIRRVATKYPNFTARLLKERGWAADVVELSGNIELAAVTGLADAVVDVVQTGATLRAAGLVEVEVLAHSTARLVVNRQALKLKRAVLKPLIQRLRELSGS</sequence>
<evidence type="ECO:0000255" key="1">
    <source>
        <dbReference type="HAMAP-Rule" id="MF_01018"/>
    </source>
</evidence>
<gene>
    <name evidence="1" type="primary">hisG</name>
    <name type="ordered locus">TTHA0128</name>
</gene>
<organism>
    <name type="scientific">Thermus thermophilus (strain ATCC 27634 / DSM 579 / HB8)</name>
    <dbReference type="NCBI Taxonomy" id="300852"/>
    <lineage>
        <taxon>Bacteria</taxon>
        <taxon>Thermotogati</taxon>
        <taxon>Deinococcota</taxon>
        <taxon>Deinococci</taxon>
        <taxon>Thermales</taxon>
        <taxon>Thermaceae</taxon>
        <taxon>Thermus</taxon>
    </lineage>
</organism>